<keyword id="KW-0687">Ribonucleoprotein</keyword>
<keyword id="KW-0689">Ribosomal protein</keyword>
<keyword id="KW-0694">RNA-binding</keyword>
<keyword id="KW-0699">rRNA-binding</keyword>
<keyword id="KW-0820">tRNA-binding</keyword>
<accession>A6WHU0</accession>
<sequence length="179" mass="20229">MAKLHDKYQETVVAELAKKFGYTSVMQVPRIEKITLNMGVGEAVADKKIMDHAVRDMTAIAGQKPVVTVARKSVAGFKIREGYPIGCKVTLRGERMWEFLERLVDIAIPRIRDFRGLSAKAFDGRGNYAMGVREQIIFPEIDYDKIDKIRGMDIVITTTAKNDEEGRALLDAFNFPFKK</sequence>
<feature type="chain" id="PRO_1000052821" description="Large ribosomal subunit protein uL5">
    <location>
        <begin position="1"/>
        <end position="179"/>
    </location>
</feature>
<name>RL5_SHEB8</name>
<comment type="function">
    <text evidence="1">This is one of the proteins that bind and probably mediate the attachment of the 5S RNA into the large ribosomal subunit, where it forms part of the central protuberance. In the 70S ribosome it contacts protein S13 of the 30S subunit (bridge B1b), connecting the 2 subunits; this bridge is implicated in subunit movement. Contacts the P site tRNA; the 5S rRNA and some of its associated proteins might help stabilize positioning of ribosome-bound tRNAs.</text>
</comment>
<comment type="subunit">
    <text evidence="1">Part of the 50S ribosomal subunit; part of the 5S rRNA/L5/L18/L25 subcomplex. Contacts the 5S rRNA and the P site tRNA. Forms a bridge to the 30S subunit in the 70S ribosome.</text>
</comment>
<comment type="similarity">
    <text evidence="1">Belongs to the universal ribosomal protein uL5 family.</text>
</comment>
<dbReference type="EMBL" id="CP000753">
    <property type="protein sequence ID" value="ABS06379.1"/>
    <property type="molecule type" value="Genomic_DNA"/>
</dbReference>
<dbReference type="RefSeq" id="WP_006083588.1">
    <property type="nucleotide sequence ID" value="NC_009665.1"/>
</dbReference>
<dbReference type="SMR" id="A6WHU0"/>
<dbReference type="GeneID" id="11770569"/>
<dbReference type="KEGG" id="sbm:Shew185_0208"/>
<dbReference type="HOGENOM" id="CLU_061015_2_1_6"/>
<dbReference type="GO" id="GO:1990904">
    <property type="term" value="C:ribonucleoprotein complex"/>
    <property type="evidence" value="ECO:0007669"/>
    <property type="project" value="UniProtKB-KW"/>
</dbReference>
<dbReference type="GO" id="GO:0005840">
    <property type="term" value="C:ribosome"/>
    <property type="evidence" value="ECO:0007669"/>
    <property type="project" value="UniProtKB-KW"/>
</dbReference>
<dbReference type="GO" id="GO:0019843">
    <property type="term" value="F:rRNA binding"/>
    <property type="evidence" value="ECO:0007669"/>
    <property type="project" value="UniProtKB-UniRule"/>
</dbReference>
<dbReference type="GO" id="GO:0003735">
    <property type="term" value="F:structural constituent of ribosome"/>
    <property type="evidence" value="ECO:0007669"/>
    <property type="project" value="InterPro"/>
</dbReference>
<dbReference type="GO" id="GO:0000049">
    <property type="term" value="F:tRNA binding"/>
    <property type="evidence" value="ECO:0007669"/>
    <property type="project" value="UniProtKB-UniRule"/>
</dbReference>
<dbReference type="GO" id="GO:0006412">
    <property type="term" value="P:translation"/>
    <property type="evidence" value="ECO:0007669"/>
    <property type="project" value="UniProtKB-UniRule"/>
</dbReference>
<dbReference type="FunFam" id="3.30.1440.10:FF:000001">
    <property type="entry name" value="50S ribosomal protein L5"/>
    <property type="match status" value="1"/>
</dbReference>
<dbReference type="Gene3D" id="3.30.1440.10">
    <property type="match status" value="1"/>
</dbReference>
<dbReference type="HAMAP" id="MF_01333_B">
    <property type="entry name" value="Ribosomal_uL5_B"/>
    <property type="match status" value="1"/>
</dbReference>
<dbReference type="InterPro" id="IPR002132">
    <property type="entry name" value="Ribosomal_uL5"/>
</dbReference>
<dbReference type="InterPro" id="IPR020930">
    <property type="entry name" value="Ribosomal_uL5_bac-type"/>
</dbReference>
<dbReference type="InterPro" id="IPR031309">
    <property type="entry name" value="Ribosomal_uL5_C"/>
</dbReference>
<dbReference type="InterPro" id="IPR020929">
    <property type="entry name" value="Ribosomal_uL5_CS"/>
</dbReference>
<dbReference type="InterPro" id="IPR022803">
    <property type="entry name" value="Ribosomal_uL5_dom_sf"/>
</dbReference>
<dbReference type="InterPro" id="IPR031310">
    <property type="entry name" value="Ribosomal_uL5_N"/>
</dbReference>
<dbReference type="NCBIfam" id="NF000585">
    <property type="entry name" value="PRK00010.1"/>
    <property type="match status" value="1"/>
</dbReference>
<dbReference type="PANTHER" id="PTHR11994">
    <property type="entry name" value="60S RIBOSOMAL PROTEIN L11-RELATED"/>
    <property type="match status" value="1"/>
</dbReference>
<dbReference type="Pfam" id="PF00281">
    <property type="entry name" value="Ribosomal_L5"/>
    <property type="match status" value="1"/>
</dbReference>
<dbReference type="Pfam" id="PF00673">
    <property type="entry name" value="Ribosomal_L5_C"/>
    <property type="match status" value="1"/>
</dbReference>
<dbReference type="PIRSF" id="PIRSF002161">
    <property type="entry name" value="Ribosomal_L5"/>
    <property type="match status" value="1"/>
</dbReference>
<dbReference type="SUPFAM" id="SSF55282">
    <property type="entry name" value="RL5-like"/>
    <property type="match status" value="1"/>
</dbReference>
<dbReference type="PROSITE" id="PS00358">
    <property type="entry name" value="RIBOSOMAL_L5"/>
    <property type="match status" value="1"/>
</dbReference>
<reference key="1">
    <citation type="submission" date="2007-07" db="EMBL/GenBank/DDBJ databases">
        <title>Complete sequence of chromosome of Shewanella baltica OS185.</title>
        <authorList>
            <consortium name="US DOE Joint Genome Institute"/>
            <person name="Copeland A."/>
            <person name="Lucas S."/>
            <person name="Lapidus A."/>
            <person name="Barry K."/>
            <person name="Glavina del Rio T."/>
            <person name="Dalin E."/>
            <person name="Tice H."/>
            <person name="Pitluck S."/>
            <person name="Sims D."/>
            <person name="Brettin T."/>
            <person name="Bruce D."/>
            <person name="Detter J.C."/>
            <person name="Han C."/>
            <person name="Schmutz J."/>
            <person name="Larimer F."/>
            <person name="Land M."/>
            <person name="Hauser L."/>
            <person name="Kyrpides N."/>
            <person name="Mikhailova N."/>
            <person name="Brettar I."/>
            <person name="Rodrigues J."/>
            <person name="Konstantinidis K."/>
            <person name="Tiedje J."/>
            <person name="Richardson P."/>
        </authorList>
    </citation>
    <scope>NUCLEOTIDE SEQUENCE [LARGE SCALE GENOMIC DNA]</scope>
    <source>
        <strain>OS185</strain>
    </source>
</reference>
<protein>
    <recommendedName>
        <fullName evidence="1">Large ribosomal subunit protein uL5</fullName>
    </recommendedName>
    <alternativeName>
        <fullName evidence="2">50S ribosomal protein L5</fullName>
    </alternativeName>
</protein>
<organism>
    <name type="scientific">Shewanella baltica (strain OS185)</name>
    <dbReference type="NCBI Taxonomy" id="402882"/>
    <lineage>
        <taxon>Bacteria</taxon>
        <taxon>Pseudomonadati</taxon>
        <taxon>Pseudomonadota</taxon>
        <taxon>Gammaproteobacteria</taxon>
        <taxon>Alteromonadales</taxon>
        <taxon>Shewanellaceae</taxon>
        <taxon>Shewanella</taxon>
    </lineage>
</organism>
<gene>
    <name evidence="1" type="primary">rplE</name>
    <name type="ordered locus">Shew185_0208</name>
</gene>
<proteinExistence type="inferred from homology"/>
<evidence type="ECO:0000255" key="1">
    <source>
        <dbReference type="HAMAP-Rule" id="MF_01333"/>
    </source>
</evidence>
<evidence type="ECO:0000305" key="2"/>